<protein>
    <recommendedName>
        <fullName evidence="1">Probable transaldolase</fullName>
        <ecNumber evidence="1">2.2.1.2</ecNumber>
    </recommendedName>
</protein>
<name>TAL_GEOSM</name>
<accession>C6E082</accession>
<gene>
    <name evidence="1" type="primary">tal</name>
    <name type="ordered locus">GM21_0624</name>
</gene>
<keyword id="KW-0963">Cytoplasm</keyword>
<keyword id="KW-0570">Pentose shunt</keyword>
<keyword id="KW-0704">Schiff base</keyword>
<keyword id="KW-0808">Transferase</keyword>
<organism>
    <name type="scientific">Geobacter sp. (strain M21)</name>
    <dbReference type="NCBI Taxonomy" id="443144"/>
    <lineage>
        <taxon>Bacteria</taxon>
        <taxon>Pseudomonadati</taxon>
        <taxon>Thermodesulfobacteriota</taxon>
        <taxon>Desulfuromonadia</taxon>
        <taxon>Geobacterales</taxon>
        <taxon>Geobacteraceae</taxon>
        <taxon>Geobacter</taxon>
    </lineage>
</organism>
<evidence type="ECO:0000255" key="1">
    <source>
        <dbReference type="HAMAP-Rule" id="MF_00494"/>
    </source>
</evidence>
<comment type="function">
    <text evidence="1">Transaldolase is important for the balance of metabolites in the pentose-phosphate pathway.</text>
</comment>
<comment type="catalytic activity">
    <reaction evidence="1">
        <text>D-sedoheptulose 7-phosphate + D-glyceraldehyde 3-phosphate = D-erythrose 4-phosphate + beta-D-fructose 6-phosphate</text>
        <dbReference type="Rhea" id="RHEA:17053"/>
        <dbReference type="ChEBI" id="CHEBI:16897"/>
        <dbReference type="ChEBI" id="CHEBI:57483"/>
        <dbReference type="ChEBI" id="CHEBI:57634"/>
        <dbReference type="ChEBI" id="CHEBI:59776"/>
        <dbReference type="EC" id="2.2.1.2"/>
    </reaction>
</comment>
<comment type="pathway">
    <text evidence="1">Carbohydrate degradation; pentose phosphate pathway; D-glyceraldehyde 3-phosphate and beta-D-fructose 6-phosphate from D-ribose 5-phosphate and D-xylulose 5-phosphate (non-oxidative stage): step 2/3.</text>
</comment>
<comment type="subcellular location">
    <subcellularLocation>
        <location evidence="1">Cytoplasm</location>
    </subcellularLocation>
</comment>
<comment type="similarity">
    <text evidence="1">Belongs to the transaldolase family. Type 3B subfamily.</text>
</comment>
<sequence>MKFFIDTADVKEIREANELGLVDGVTTNPSLIAKSGRRFEEVIKEITGIVDGPISAEVISLEHDGMIAEATELAKIHPNIVIKLPMTPEGLKATKTLYKRGIKTNVTLIFTPMQALLAAKAGATYVSPFVGRLDDISQNGMAIIQEIRTIFDNYGMDAEIIVASIRNPIHVLDSALIGADICTIPYSVMLQLAKHPLTDAGIKKFLEDWEKVPK</sequence>
<feature type="chain" id="PRO_1000206472" description="Probable transaldolase">
    <location>
        <begin position="1"/>
        <end position="214"/>
    </location>
</feature>
<feature type="active site" description="Schiff-base intermediate with substrate" evidence="1">
    <location>
        <position position="83"/>
    </location>
</feature>
<dbReference type="EC" id="2.2.1.2" evidence="1"/>
<dbReference type="EMBL" id="CP001661">
    <property type="protein sequence ID" value="ACT16698.1"/>
    <property type="molecule type" value="Genomic_DNA"/>
</dbReference>
<dbReference type="SMR" id="C6E082"/>
<dbReference type="STRING" id="443144.GM21_0624"/>
<dbReference type="KEGG" id="gem:GM21_0624"/>
<dbReference type="eggNOG" id="COG0176">
    <property type="taxonomic scope" value="Bacteria"/>
</dbReference>
<dbReference type="HOGENOM" id="CLU_079764_0_0_7"/>
<dbReference type="OrthoDB" id="9807051at2"/>
<dbReference type="UniPathway" id="UPA00115">
    <property type="reaction ID" value="UER00414"/>
</dbReference>
<dbReference type="GO" id="GO:0005737">
    <property type="term" value="C:cytoplasm"/>
    <property type="evidence" value="ECO:0007669"/>
    <property type="project" value="UniProtKB-SubCell"/>
</dbReference>
<dbReference type="GO" id="GO:0016832">
    <property type="term" value="F:aldehyde-lyase activity"/>
    <property type="evidence" value="ECO:0007669"/>
    <property type="project" value="InterPro"/>
</dbReference>
<dbReference type="GO" id="GO:0004801">
    <property type="term" value="F:transaldolase activity"/>
    <property type="evidence" value="ECO:0007669"/>
    <property type="project" value="UniProtKB-UniRule"/>
</dbReference>
<dbReference type="GO" id="GO:0005975">
    <property type="term" value="P:carbohydrate metabolic process"/>
    <property type="evidence" value="ECO:0007669"/>
    <property type="project" value="InterPro"/>
</dbReference>
<dbReference type="GO" id="GO:0006098">
    <property type="term" value="P:pentose-phosphate shunt"/>
    <property type="evidence" value="ECO:0007669"/>
    <property type="project" value="UniProtKB-UniRule"/>
</dbReference>
<dbReference type="CDD" id="cd00956">
    <property type="entry name" value="Transaldolase_FSA"/>
    <property type="match status" value="1"/>
</dbReference>
<dbReference type="FunFam" id="3.20.20.70:FF:000018">
    <property type="entry name" value="Probable transaldolase"/>
    <property type="match status" value="1"/>
</dbReference>
<dbReference type="Gene3D" id="3.20.20.70">
    <property type="entry name" value="Aldolase class I"/>
    <property type="match status" value="1"/>
</dbReference>
<dbReference type="HAMAP" id="MF_00494">
    <property type="entry name" value="Transaldolase_3b"/>
    <property type="match status" value="1"/>
</dbReference>
<dbReference type="InterPro" id="IPR013785">
    <property type="entry name" value="Aldolase_TIM"/>
</dbReference>
<dbReference type="InterPro" id="IPR001585">
    <property type="entry name" value="TAL/FSA"/>
</dbReference>
<dbReference type="InterPro" id="IPR022999">
    <property type="entry name" value="Transaldolase_3B"/>
</dbReference>
<dbReference type="InterPro" id="IPR004731">
    <property type="entry name" value="Transaldolase_3B/F6P_aldolase"/>
</dbReference>
<dbReference type="InterPro" id="IPR018225">
    <property type="entry name" value="Transaldolase_AS"/>
</dbReference>
<dbReference type="InterPro" id="IPR033919">
    <property type="entry name" value="TSA/FSA_arc/bac"/>
</dbReference>
<dbReference type="NCBIfam" id="TIGR00875">
    <property type="entry name" value="fsa_talC_mipB"/>
    <property type="match status" value="1"/>
</dbReference>
<dbReference type="PANTHER" id="PTHR10683:SF40">
    <property type="entry name" value="FRUCTOSE-6-PHOSPHATE ALDOLASE 1-RELATED"/>
    <property type="match status" value="1"/>
</dbReference>
<dbReference type="PANTHER" id="PTHR10683">
    <property type="entry name" value="TRANSALDOLASE"/>
    <property type="match status" value="1"/>
</dbReference>
<dbReference type="Pfam" id="PF00923">
    <property type="entry name" value="TAL_FSA"/>
    <property type="match status" value="1"/>
</dbReference>
<dbReference type="SUPFAM" id="SSF51569">
    <property type="entry name" value="Aldolase"/>
    <property type="match status" value="1"/>
</dbReference>
<dbReference type="PROSITE" id="PS01054">
    <property type="entry name" value="TRANSALDOLASE_1"/>
    <property type="match status" value="1"/>
</dbReference>
<dbReference type="PROSITE" id="PS00958">
    <property type="entry name" value="TRANSALDOLASE_2"/>
    <property type="match status" value="1"/>
</dbReference>
<proteinExistence type="inferred from homology"/>
<reference key="1">
    <citation type="submission" date="2009-07" db="EMBL/GenBank/DDBJ databases">
        <title>Complete sequence of Geobacter sp. M21.</title>
        <authorList>
            <consortium name="US DOE Joint Genome Institute"/>
            <person name="Lucas S."/>
            <person name="Copeland A."/>
            <person name="Lapidus A."/>
            <person name="Glavina del Rio T."/>
            <person name="Dalin E."/>
            <person name="Tice H."/>
            <person name="Bruce D."/>
            <person name="Goodwin L."/>
            <person name="Pitluck S."/>
            <person name="Saunders E."/>
            <person name="Brettin T."/>
            <person name="Detter J.C."/>
            <person name="Han C."/>
            <person name="Larimer F."/>
            <person name="Land M."/>
            <person name="Hauser L."/>
            <person name="Kyrpides N."/>
            <person name="Ovchinnikova G."/>
            <person name="Lovley D."/>
        </authorList>
    </citation>
    <scope>NUCLEOTIDE SEQUENCE [LARGE SCALE GENOMIC DNA]</scope>
    <source>
        <strain>M21</strain>
    </source>
</reference>